<feature type="chain" id="PRO_0000457979" description="3',5'-bisphosphate nucleotidase">
    <location>
        <begin position="1"/>
        <end position="317"/>
    </location>
</feature>
<feature type="active site" description="Proton acceptor" evidence="1">
    <location>
        <position position="46"/>
    </location>
</feature>
<feature type="active site" description="Proton acceptor" evidence="1">
    <location>
        <position position="123"/>
    </location>
</feature>
<feature type="binding site" evidence="2 9 10">
    <location>
        <position position="69"/>
    </location>
    <ligand>
        <name>Mg(2+)</name>
        <dbReference type="ChEBI" id="CHEBI:18420"/>
        <label>1</label>
    </ligand>
</feature>
<feature type="binding site" evidence="1">
    <location>
        <position position="69"/>
    </location>
    <ligand>
        <name>Mg(2+)</name>
        <dbReference type="ChEBI" id="CHEBI:18420"/>
        <label>3</label>
    </ligand>
</feature>
<feature type="binding site" evidence="2 9 10">
    <location>
        <position position="118"/>
    </location>
    <ligand>
        <name>Mg(2+)</name>
        <dbReference type="ChEBI" id="CHEBI:18420"/>
        <label>1</label>
    </ligand>
</feature>
<feature type="binding site" evidence="6 9 10">
    <location>
        <position position="118"/>
    </location>
    <ligand>
        <name>Mg(2+)</name>
        <dbReference type="ChEBI" id="CHEBI:18420"/>
        <label>2</label>
    </ligand>
</feature>
<feature type="binding site" evidence="2 9 10">
    <location>
        <position position="120"/>
    </location>
    <ligand>
        <name>Mg(2+)</name>
        <dbReference type="ChEBI" id="CHEBI:18420"/>
        <label>1</label>
    </ligand>
</feature>
<feature type="binding site" evidence="1">
    <location>
        <position position="121"/>
    </location>
    <ligand>
        <name>Mg(2+)</name>
        <dbReference type="ChEBI" id="CHEBI:18420"/>
        <label>2</label>
    </ligand>
</feature>
<feature type="binding site" evidence="1">
    <location>
        <position position="123"/>
    </location>
    <ligand>
        <name>adenosine 3',5'-bisphosphate</name>
        <dbReference type="ChEBI" id="CHEBI:58343"/>
    </ligand>
</feature>
<feature type="binding site" evidence="2 9">
    <location>
        <position position="198"/>
    </location>
    <ligand>
        <name>AMP</name>
        <dbReference type="ChEBI" id="CHEBI:456215"/>
    </ligand>
</feature>
<feature type="binding site" evidence="1">
    <location>
        <position position="203"/>
    </location>
    <ligand>
        <name>adenosine 3',5'-bisphosphate</name>
        <dbReference type="ChEBI" id="CHEBI:58343"/>
    </ligand>
</feature>
<feature type="binding site" evidence="2 9">
    <location>
        <position position="203"/>
    </location>
    <ligand>
        <name>AMP</name>
        <dbReference type="ChEBI" id="CHEBI:456215"/>
    </ligand>
</feature>
<feature type="binding site" evidence="1">
    <location>
        <position position="227"/>
    </location>
    <ligand>
        <name>adenosine 3',5'-bisphosphate</name>
        <dbReference type="ChEBI" id="CHEBI:58343"/>
    </ligand>
</feature>
<feature type="binding site" evidence="2 9">
    <location>
        <position position="227"/>
    </location>
    <ligand>
        <name>AMP</name>
        <dbReference type="ChEBI" id="CHEBI:456215"/>
    </ligand>
</feature>
<feature type="binding site" evidence="1">
    <location>
        <position position="230"/>
    </location>
    <ligand>
        <name>adenosine 3',5'-bisphosphate</name>
        <dbReference type="ChEBI" id="CHEBI:58343"/>
    </ligand>
</feature>
<feature type="binding site" evidence="2 9">
    <location>
        <position position="230"/>
    </location>
    <ligand>
        <name>AMP</name>
        <dbReference type="ChEBI" id="CHEBI:456215"/>
    </ligand>
</feature>
<feature type="binding site" evidence="1">
    <location>
        <position position="244"/>
    </location>
    <ligand>
        <name>adenosine 3',5'-bisphosphate</name>
        <dbReference type="ChEBI" id="CHEBI:58343"/>
    </ligand>
</feature>
<feature type="binding site" evidence="2 9">
    <location>
        <position position="244"/>
    </location>
    <ligand>
        <name>AMP</name>
        <dbReference type="ChEBI" id="CHEBI:456215"/>
    </ligand>
</feature>
<feature type="binding site" evidence="2 9">
    <location>
        <position position="251"/>
    </location>
    <ligand>
        <name>AMP</name>
        <dbReference type="ChEBI" id="CHEBI:456215"/>
    </ligand>
</feature>
<feature type="binding site" evidence="1">
    <location>
        <position position="257"/>
    </location>
    <ligand>
        <name>adenosine 3',5'-bisphosphate</name>
        <dbReference type="ChEBI" id="CHEBI:58343"/>
    </ligand>
</feature>
<feature type="binding site" evidence="2 9">
    <location>
        <position position="257"/>
    </location>
    <ligand>
        <name>AMP</name>
        <dbReference type="ChEBI" id="CHEBI:456215"/>
    </ligand>
</feature>
<feature type="binding site" evidence="6 9 10">
    <location>
        <position position="257"/>
    </location>
    <ligand>
        <name>Mg(2+)</name>
        <dbReference type="ChEBI" id="CHEBI:18420"/>
        <label>2</label>
    </ligand>
</feature>
<feature type="helix" evidence="12">
    <location>
        <begin position="4"/>
        <end position="24"/>
    </location>
</feature>
<feature type="helix" evidence="12">
    <location>
        <begin position="30"/>
        <end position="32"/>
    </location>
</feature>
<feature type="strand" evidence="12">
    <location>
        <begin position="33"/>
        <end position="35"/>
    </location>
</feature>
<feature type="strand" evidence="12">
    <location>
        <begin position="41"/>
        <end position="43"/>
    </location>
</feature>
<feature type="helix" evidence="12">
    <location>
        <begin position="44"/>
        <end position="60"/>
    </location>
</feature>
<feature type="strand" evidence="12">
    <location>
        <begin position="64"/>
        <end position="69"/>
    </location>
</feature>
<feature type="strand" evidence="11">
    <location>
        <begin position="72"/>
        <end position="74"/>
    </location>
</feature>
<feature type="helix" evidence="12">
    <location>
        <begin position="77"/>
        <end position="88"/>
    </location>
</feature>
<feature type="helix" evidence="12">
    <location>
        <begin position="95"/>
        <end position="103"/>
    </location>
</feature>
<feature type="strand" evidence="12">
    <location>
        <begin position="110"/>
        <end position="121"/>
    </location>
</feature>
<feature type="helix" evidence="12">
    <location>
        <begin position="123"/>
        <end position="128"/>
    </location>
</feature>
<feature type="strand" evidence="12">
    <location>
        <begin position="133"/>
        <end position="140"/>
    </location>
</feature>
<feature type="strand" evidence="12">
    <location>
        <begin position="143"/>
        <end position="151"/>
    </location>
</feature>
<feature type="strand" evidence="12">
    <location>
        <begin position="158"/>
        <end position="163"/>
    </location>
</feature>
<feature type="strand" evidence="12">
    <location>
        <begin position="168"/>
        <end position="172"/>
    </location>
</feature>
<feature type="strand" evidence="12">
    <location>
        <begin position="175"/>
        <end position="182"/>
    </location>
</feature>
<feature type="helix" evidence="12">
    <location>
        <begin position="190"/>
        <end position="192"/>
    </location>
</feature>
<feature type="strand" evidence="12">
    <location>
        <begin position="195"/>
        <end position="197"/>
    </location>
</feature>
<feature type="turn" evidence="12">
    <location>
        <begin position="201"/>
        <end position="203"/>
    </location>
</feature>
<feature type="helix" evidence="12">
    <location>
        <begin position="206"/>
        <end position="215"/>
    </location>
</feature>
<feature type="helix" evidence="12">
    <location>
        <begin position="229"/>
        <end position="235"/>
    </location>
</feature>
<feature type="strand" evidence="12">
    <location>
        <begin position="240"/>
        <end position="244"/>
    </location>
</feature>
<feature type="strand" evidence="12">
    <location>
        <begin position="247"/>
        <end position="250"/>
    </location>
</feature>
<feature type="helix" evidence="12">
    <location>
        <begin position="255"/>
        <end position="257"/>
    </location>
</feature>
<feature type="helix" evidence="12">
    <location>
        <begin position="259"/>
        <end position="267"/>
    </location>
</feature>
<feature type="strand" evidence="12">
    <location>
        <begin position="271"/>
        <end position="273"/>
    </location>
</feature>
<feature type="strand" evidence="12">
    <location>
        <begin position="284"/>
        <end position="287"/>
    </location>
</feature>
<feature type="strand" evidence="12">
    <location>
        <begin position="293"/>
        <end position="297"/>
    </location>
</feature>
<feature type="helix" evidence="12">
    <location>
        <begin position="302"/>
        <end position="312"/>
    </location>
</feature>
<feature type="turn" evidence="12">
    <location>
        <begin position="313"/>
        <end position="315"/>
    </location>
</feature>
<sequence>MSFDKELALALEIVQVSCKITTSVAEHTLTDQTQIKNDKSPVTVGDYSVQAYVNKKIHETFPEDQIVAEEDTKTIPEDIFAKVCKHVQIYSDMKDDEIRKSIDLGNSTGGKGRHWVLDPIDGTLGFLRREQYAVCLAFMIDGDIKVGVLGCPNFEGGLIVAAQKGCGAKMFSVNDIKNGKDIHVSTTPKTSDMCFCESVEVSHTDQSRSKTITERLQVTKPPVRMDSQCKYMAIASGRADVYLRLPRNLSYQEKIWDHAAGYLIVKEAGGKVTDIYGNDLDFSLGRTLCNNHGIVASNGILHEETVNVVKDVLSDLK</sequence>
<proteinExistence type="evidence at protein level"/>
<name>DPNP_ENTH1</name>
<accession>C4M4T9</accession>
<accession>A0A175JSI6</accession>
<dbReference type="EC" id="3.1.3.7" evidence="2"/>
<dbReference type="EC" id="3.1.3.57" evidence="2"/>
<dbReference type="EMBL" id="DS571265">
    <property type="protein sequence ID" value="EAL46563.1"/>
    <property type="molecule type" value="Genomic_DNA"/>
</dbReference>
<dbReference type="RefSeq" id="XP_651950.1">
    <property type="nucleotide sequence ID" value="XM_646858.1"/>
</dbReference>
<dbReference type="PDB" id="4HXV">
    <property type="method" value="X-ray"/>
    <property type="resolution" value="2.60 A"/>
    <property type="chains" value="A=1-317"/>
</dbReference>
<dbReference type="PDB" id="4O7I">
    <property type="method" value="X-ray"/>
    <property type="resolution" value="2.11 A"/>
    <property type="chains" value="A=1-317"/>
</dbReference>
<dbReference type="PDBsum" id="4HXV"/>
<dbReference type="PDBsum" id="4O7I"/>
<dbReference type="SMR" id="C4M4T9"/>
<dbReference type="FunCoup" id="C4M4T9">
    <property type="interactions" value="21"/>
</dbReference>
<dbReference type="STRING" id="5759.C4M4T9"/>
<dbReference type="EnsemblProtists" id="GAT96396">
    <property type="protein sequence ID" value="GAT96396"/>
    <property type="gene ID" value="CL6EHI_193350"/>
</dbReference>
<dbReference type="EnsemblProtists" id="rna_EHI_193350-1">
    <property type="protein sequence ID" value="rna_EHI_193350-1"/>
    <property type="gene ID" value="EHI_193350"/>
</dbReference>
<dbReference type="GeneID" id="3406246"/>
<dbReference type="KEGG" id="ehi:EHI_193350"/>
<dbReference type="VEuPathDB" id="AmoebaDB:EHI5A_027400"/>
<dbReference type="VEuPathDB" id="AmoebaDB:EHI7A_131350"/>
<dbReference type="VEuPathDB" id="AmoebaDB:EHI8A_056440"/>
<dbReference type="VEuPathDB" id="AmoebaDB:EHI_193350"/>
<dbReference type="VEuPathDB" id="AmoebaDB:KM1_041910"/>
<dbReference type="eggNOG" id="KOG1528">
    <property type="taxonomic scope" value="Eukaryota"/>
</dbReference>
<dbReference type="HOGENOM" id="CLU_033446_1_1_1"/>
<dbReference type="InParanoid" id="C4M4T9"/>
<dbReference type="OMA" id="MSYQQER"/>
<dbReference type="OrthoDB" id="411145at2759"/>
<dbReference type="EvolutionaryTrace" id="C4M4T9"/>
<dbReference type="Proteomes" id="UP000001926">
    <property type="component" value="Partially assembled WGS sequence"/>
</dbReference>
<dbReference type="GO" id="GO:0005737">
    <property type="term" value="C:cytoplasm"/>
    <property type="evidence" value="ECO:0000314"/>
    <property type="project" value="UniProtKB"/>
</dbReference>
<dbReference type="GO" id="GO:0008441">
    <property type="term" value="F:3'(2'),5'-bisphosphate nucleotidase activity"/>
    <property type="evidence" value="ECO:0000314"/>
    <property type="project" value="UniProtKB"/>
</dbReference>
<dbReference type="GO" id="GO:0004441">
    <property type="term" value="F:inositol-1,4-bisphosphate 1-phosphatase activity"/>
    <property type="evidence" value="ECO:0000314"/>
    <property type="project" value="UniProtKB"/>
</dbReference>
<dbReference type="GO" id="GO:0000287">
    <property type="term" value="F:magnesium ion binding"/>
    <property type="evidence" value="ECO:0000314"/>
    <property type="project" value="UniProtKB"/>
</dbReference>
<dbReference type="GO" id="GO:0000166">
    <property type="term" value="F:nucleotide binding"/>
    <property type="evidence" value="ECO:0007669"/>
    <property type="project" value="UniProtKB-KW"/>
</dbReference>
<dbReference type="GO" id="GO:0046854">
    <property type="term" value="P:phosphatidylinositol phosphate biosynthetic process"/>
    <property type="evidence" value="ECO:0007669"/>
    <property type="project" value="InterPro"/>
</dbReference>
<dbReference type="GO" id="GO:0000103">
    <property type="term" value="P:sulfate assimilation"/>
    <property type="evidence" value="ECO:0000318"/>
    <property type="project" value="GO_Central"/>
</dbReference>
<dbReference type="CDD" id="cd01517">
    <property type="entry name" value="PAP_phosphatase"/>
    <property type="match status" value="1"/>
</dbReference>
<dbReference type="FunFam" id="3.40.190.80:FF:000003">
    <property type="entry name" value="PAP-specific phosphatase HAL2-like"/>
    <property type="match status" value="1"/>
</dbReference>
<dbReference type="FunFam" id="3.30.540.10:FF:000039">
    <property type="entry name" value="SAL1 phosphatase, putative"/>
    <property type="match status" value="1"/>
</dbReference>
<dbReference type="Gene3D" id="3.40.190.80">
    <property type="match status" value="1"/>
</dbReference>
<dbReference type="Gene3D" id="3.30.540.10">
    <property type="entry name" value="Fructose-1,6-Bisphosphatase, subunit A, domain 1"/>
    <property type="match status" value="1"/>
</dbReference>
<dbReference type="InterPro" id="IPR020583">
    <property type="entry name" value="Inositol_monoP_metal-BS"/>
</dbReference>
<dbReference type="InterPro" id="IPR051090">
    <property type="entry name" value="Inositol_monoP_superfamily"/>
</dbReference>
<dbReference type="InterPro" id="IPR000760">
    <property type="entry name" value="Inositol_monophosphatase-like"/>
</dbReference>
<dbReference type="InterPro" id="IPR020550">
    <property type="entry name" value="Inositol_monophosphatase_CS"/>
</dbReference>
<dbReference type="PANTHER" id="PTHR43200:SF6">
    <property type="entry name" value="3'(2'),5'-BISPHOSPHATE NUCLEOTIDASE"/>
    <property type="match status" value="1"/>
</dbReference>
<dbReference type="PANTHER" id="PTHR43200">
    <property type="entry name" value="PHOSPHATASE"/>
    <property type="match status" value="1"/>
</dbReference>
<dbReference type="Pfam" id="PF00459">
    <property type="entry name" value="Inositol_P"/>
    <property type="match status" value="1"/>
</dbReference>
<dbReference type="PRINTS" id="PR00377">
    <property type="entry name" value="IMPHPHTASES"/>
</dbReference>
<dbReference type="SUPFAM" id="SSF56655">
    <property type="entry name" value="Carbohydrate phosphatase"/>
    <property type="match status" value="1"/>
</dbReference>
<dbReference type="PROSITE" id="PS00629">
    <property type="entry name" value="IMP_1"/>
    <property type="match status" value="1"/>
</dbReference>
<dbReference type="PROSITE" id="PS00630">
    <property type="entry name" value="IMP_2"/>
    <property type="match status" value="1"/>
</dbReference>
<protein>
    <recommendedName>
        <fullName evidence="3">3',5'-bisphosphate nucleotidase</fullName>
        <ecNumber evidence="2">3.1.3.7</ecNumber>
    </recommendedName>
    <alternativeName>
        <fullName evidence="4">3'-phosphoadenosine 5'-phosphatase-1</fullName>
        <shortName evidence="4">PAP phosphatase-1</shortName>
    </alternativeName>
    <alternativeName>
        <fullName evidence="5">Inositol-1,4-bisphosphate 1-phosphatase</fullName>
        <ecNumber evidence="2">3.1.3.57</ecNumber>
    </alternativeName>
</protein>
<reference evidence="7" key="1">
    <citation type="journal article" date="2005" name="Nature">
        <title>The genome of the protist parasite Entamoeba histolytica.</title>
        <authorList>
            <person name="Loftus B.J."/>
            <person name="Anderson I."/>
            <person name="Davies R."/>
            <person name="Alsmark U.C."/>
            <person name="Samuelson J."/>
            <person name="Amedeo P."/>
            <person name="Roncaglia P."/>
            <person name="Berriman M."/>
            <person name="Hirt R.P."/>
            <person name="Mann B.J."/>
            <person name="Nozaki T."/>
            <person name="Suh B."/>
            <person name="Pop M."/>
            <person name="Duchene M."/>
            <person name="Ackers J."/>
            <person name="Tannich E."/>
            <person name="Leippe M."/>
            <person name="Hofer M."/>
            <person name="Bruchhaus I."/>
            <person name="Willhoeft U."/>
            <person name="Bhattacharya A."/>
            <person name="Chillingworth T."/>
            <person name="Churcher C.M."/>
            <person name="Hance Z."/>
            <person name="Harris B."/>
            <person name="Harris D."/>
            <person name="Jagels K."/>
            <person name="Moule S."/>
            <person name="Mungall K.L."/>
            <person name="Ormond D."/>
            <person name="Squares R."/>
            <person name="Whitehead S."/>
            <person name="Quail M.A."/>
            <person name="Rabbinowitsch E."/>
            <person name="Norbertczak H."/>
            <person name="Price C."/>
            <person name="Wang Z."/>
            <person name="Guillen N."/>
            <person name="Gilchrist C."/>
            <person name="Stroup S.E."/>
            <person name="Bhattacharya S."/>
            <person name="Lohia A."/>
            <person name="Foster P.G."/>
            <person name="Sicheritz-Ponten T."/>
            <person name="Weber C."/>
            <person name="Singh U."/>
            <person name="Mukherjee C."/>
            <person name="El-Sayed N.M.A."/>
            <person name="Petri W.A."/>
            <person name="Clark C.G."/>
            <person name="Embley T.M."/>
            <person name="Barrell B.G."/>
            <person name="Fraser C.M."/>
            <person name="Hall N."/>
        </authorList>
    </citation>
    <scope>NUCLEOTIDE SEQUENCE [LARGE SCALE GENOMIC DNA]</scope>
    <source>
        <strain evidence="7">ATCC 30459 / HM-1:IMSS / ABRM</strain>
    </source>
</reference>
<reference evidence="9 10" key="2">
    <citation type="journal article" date="2014" name="Acta Crystallogr. D">
        <title>Structural elucidation of a dual-activity PAP phosphatase-1 from Entamoeba histolytica capable of hydrolysing both 3'-phosphoadenosine 5'-phosphate and inositol 1,4-bisphosphate.</title>
        <authorList>
            <person name="Faisal Tarique K."/>
            <person name="Arif Abdul Rehman S."/>
            <person name="Gourinath S."/>
        </authorList>
    </citation>
    <scope>X-RAY CRYSTALLOGRAPHY (2.11 ANGSTROMS) IN COMPLEX WITH AMP; SODIUM AND MAGNESIUM</scope>
    <scope>FUNCTION</scope>
    <scope>CATALYTIC ACTIVITY</scope>
    <scope>COFACTOR</scope>
    <scope>ACTIVITY REGULATION</scope>
    <scope>BIOPHYSICOCHEMICAL PROPERTIES</scope>
    <scope>SUBUNIT</scope>
    <scope>SUBCELLULAR LOCATION</scope>
</reference>
<comment type="function">
    <text evidence="2">Phosphatase that converts 3'-phosphoadenosine 5'-phosphate (PAP) to AMP (PubMed:25004978). Is also able to hydrolyze inositol 1,4-bisphosphate but with less efficiency (PubMed:25004978).</text>
</comment>
<comment type="catalytic activity">
    <reaction evidence="2">
        <text>adenosine 3',5'-bisphosphate + H2O = AMP + phosphate</text>
        <dbReference type="Rhea" id="RHEA:10040"/>
        <dbReference type="ChEBI" id="CHEBI:15377"/>
        <dbReference type="ChEBI" id="CHEBI:43474"/>
        <dbReference type="ChEBI" id="CHEBI:58343"/>
        <dbReference type="ChEBI" id="CHEBI:456215"/>
        <dbReference type="EC" id="3.1.3.7"/>
    </reaction>
</comment>
<comment type="catalytic activity">
    <reaction evidence="2">
        <text>1D-myo-inositol 1,4-bisphosphate + H2O = 1D-myo-inositol 4-phosphate + phosphate</text>
        <dbReference type="Rhea" id="RHEA:15553"/>
        <dbReference type="ChEBI" id="CHEBI:15377"/>
        <dbReference type="ChEBI" id="CHEBI:43474"/>
        <dbReference type="ChEBI" id="CHEBI:58282"/>
        <dbReference type="ChEBI" id="CHEBI:58469"/>
        <dbReference type="EC" id="3.1.3.57"/>
    </reaction>
</comment>
<comment type="cofactor">
    <cofactor evidence="2">
        <name>Mg(2+)</name>
        <dbReference type="ChEBI" id="CHEBI:18420"/>
    </cofactor>
    <text evidence="2">Binds 3 Mg(2+) ions per subunit (PubMed:25004978). Active also with Mn(2+) or Co(2+) (PubMed:25004978).</text>
</comment>
<comment type="activity regulation">
    <text evidence="2">Inhibited by Li(2+).</text>
</comment>
<comment type="biophysicochemical properties">
    <phDependence>
        <text evidence="2">Optimum pH is 7 (PubMed:25004978). Active between pH 6-8.5 (PubMed:25004978).</text>
    </phDependence>
    <temperatureDependence>
        <text evidence="2">Optimum temperature is 50 degrees Celsius (PubMed:25004978). Active between 10-60 degrees Celsius (PubMed:25004978).</text>
    </temperatureDependence>
</comment>
<comment type="subunit">
    <text evidence="2">Monomer.</text>
</comment>
<comment type="subcellular location">
    <subcellularLocation>
        <location evidence="2">Cytoplasm</location>
    </subcellularLocation>
</comment>
<comment type="similarity">
    <text evidence="5">Belongs to the inositol monophosphatase superfamily.</text>
</comment>
<evidence type="ECO:0000250" key="1">
    <source>
        <dbReference type="UniProtKB" id="P32179"/>
    </source>
</evidence>
<evidence type="ECO:0000269" key="2">
    <source>
    </source>
</evidence>
<evidence type="ECO:0000303" key="3">
    <source>
    </source>
</evidence>
<evidence type="ECO:0000303" key="4">
    <source>
    </source>
</evidence>
<evidence type="ECO:0000305" key="5"/>
<evidence type="ECO:0000305" key="6">
    <source>
    </source>
</evidence>
<evidence type="ECO:0000312" key="7">
    <source>
        <dbReference type="EMBL" id="EAL46563.1"/>
    </source>
</evidence>
<evidence type="ECO:0000312" key="8">
    <source>
        <dbReference type="Proteomes" id="UP000001926"/>
    </source>
</evidence>
<evidence type="ECO:0007744" key="9">
    <source>
        <dbReference type="PDB" id="4HXV"/>
    </source>
</evidence>
<evidence type="ECO:0007744" key="10">
    <source>
        <dbReference type="PDB" id="4O7I"/>
    </source>
</evidence>
<evidence type="ECO:0007829" key="11">
    <source>
        <dbReference type="PDB" id="4HXV"/>
    </source>
</evidence>
<evidence type="ECO:0007829" key="12">
    <source>
        <dbReference type="PDB" id="4O7I"/>
    </source>
</evidence>
<keyword id="KW-0002">3D-structure</keyword>
<keyword id="KW-0963">Cytoplasm</keyword>
<keyword id="KW-0378">Hydrolase</keyword>
<keyword id="KW-0460">Magnesium</keyword>
<keyword id="KW-0479">Metal-binding</keyword>
<keyword id="KW-0511">Multifunctional enzyme</keyword>
<keyword id="KW-0547">Nucleotide-binding</keyword>
<keyword id="KW-1185">Reference proteome</keyword>
<gene>
    <name evidence="7" type="ORF">EHI_193350</name>
</gene>
<organism evidence="8">
    <name type="scientific">Entamoeba histolytica (strain ATCC 30459 / HM-1:IMSS / ABRM)</name>
    <dbReference type="NCBI Taxonomy" id="294381"/>
    <lineage>
        <taxon>Eukaryota</taxon>
        <taxon>Amoebozoa</taxon>
        <taxon>Evosea</taxon>
        <taxon>Archamoebae</taxon>
        <taxon>Mastigamoebida</taxon>
        <taxon>Entamoebidae</taxon>
        <taxon>Entamoeba</taxon>
    </lineage>
</organism>